<organism>
    <name type="scientific">Mycoplasma mobile (strain ATCC 43663 / 163K / NCTC 11711)</name>
    <name type="common">Mesomycoplasma mobile</name>
    <dbReference type="NCBI Taxonomy" id="267748"/>
    <lineage>
        <taxon>Bacteria</taxon>
        <taxon>Bacillati</taxon>
        <taxon>Mycoplasmatota</taxon>
        <taxon>Mycoplasmoidales</taxon>
        <taxon>Metamycoplasmataceae</taxon>
        <taxon>Mesomycoplasma</taxon>
    </lineage>
</organism>
<protein>
    <recommendedName>
        <fullName evidence="1">tRNA uridine 5-carboxymethylaminomethyl modification enzyme MnmG</fullName>
    </recommendedName>
    <alternativeName>
        <fullName evidence="1">Glucose-inhibited division protein A</fullName>
    </alternativeName>
</protein>
<accession>Q6KID6</accession>
<gene>
    <name evidence="1" type="primary">mnmG</name>
    <name evidence="1" type="synonym">gidA</name>
    <name type="ordered locus">MMOB1540</name>
</gene>
<name>MNMG_MYCM1</name>
<evidence type="ECO:0000255" key="1">
    <source>
        <dbReference type="HAMAP-Rule" id="MF_00129"/>
    </source>
</evidence>
<sequence>MAAKIYDAIVIGGGHAGVEAAFILSKKNFNVALISLNQNRLASMPCNPSIGGPAKGIITREIDALGGKQAYFADQAMIQIKMLNTSKGPAVRAIRAQIDKEKYSQIILKAVQETKNIDLIEDMVFEIQTKDNKISGVITEKNGLLETKTAIITAGTYLDSYILRGEEKYSSGPDGEKTSNSLSNSLIKLGFKLLRLKTGTPPRIYANSIDFSEVEEEILPESNLNFSIYHSKKLSKQIHCYLTYTSEKTHQIILDNINKSSMYSGLIKGIGPRYCPSVEDKIVRFKDKERHQIFFEPETIKADIMYINGLSTSMPIDVQDQMIKSINGLKNAKVAKYAYAIEYDAIDPLQLKKSLESKEIENLFFAGQINGTSGYEEAAGQGLLAGINASLKLENREALNLKRSDSYIGVLIDDLTTKGTKEPYRMLTSRAEYRLLLRNDNADIRLLKYAKYAKTLTDKEIATTEAKYDLITKKIAELENQYISINDPLAKKYNLANSTSFLQLISRHEIDIKEIVGNFPFLEELSTNVRLDGYIKKQLSQADKMLRLENLKLPEDLNYDNVVNLAFEARQKLKMIKPLTIGQASRISGINPADIQMLMFHLNLKVVKNEN</sequence>
<keyword id="KW-0963">Cytoplasm</keyword>
<keyword id="KW-0274">FAD</keyword>
<keyword id="KW-0285">Flavoprotein</keyword>
<keyword id="KW-0520">NAD</keyword>
<keyword id="KW-1185">Reference proteome</keyword>
<keyword id="KW-0819">tRNA processing</keyword>
<reference key="1">
    <citation type="journal article" date="2004" name="Genome Res.">
        <title>The complete genome and proteome of Mycoplasma mobile.</title>
        <authorList>
            <person name="Jaffe J.D."/>
            <person name="Stange-Thomann N."/>
            <person name="Smith C."/>
            <person name="DeCaprio D."/>
            <person name="Fisher S."/>
            <person name="Butler J."/>
            <person name="Calvo S."/>
            <person name="Elkins T."/>
            <person name="FitzGerald M.G."/>
            <person name="Hafez N."/>
            <person name="Kodira C.D."/>
            <person name="Major J."/>
            <person name="Wang S."/>
            <person name="Wilkinson J."/>
            <person name="Nicol R."/>
            <person name="Nusbaum C."/>
            <person name="Birren B."/>
            <person name="Berg H.C."/>
            <person name="Church G.M."/>
        </authorList>
    </citation>
    <scope>NUCLEOTIDE SEQUENCE [LARGE SCALE GENOMIC DNA]</scope>
    <source>
        <strain>ATCC 43663 / NCTC 11711 / 163 K</strain>
    </source>
</reference>
<proteinExistence type="inferred from homology"/>
<comment type="function">
    <text evidence="1">NAD-binding protein involved in the addition of a carboxymethylaminomethyl (cmnm) group at the wobble position (U34) of certain tRNAs, forming tRNA-cmnm(5)s(2)U34.</text>
</comment>
<comment type="cofactor">
    <cofactor evidence="1">
        <name>FAD</name>
        <dbReference type="ChEBI" id="CHEBI:57692"/>
    </cofactor>
</comment>
<comment type="subunit">
    <text evidence="1">Homodimer. Heterotetramer of two MnmE and two MnmG subunits.</text>
</comment>
<comment type="subcellular location">
    <subcellularLocation>
        <location evidence="1">Cytoplasm</location>
    </subcellularLocation>
</comment>
<comment type="similarity">
    <text evidence="1">Belongs to the MnmG family.</text>
</comment>
<dbReference type="EMBL" id="AE017308">
    <property type="protein sequence ID" value="AAT27640.1"/>
    <property type="molecule type" value="Genomic_DNA"/>
</dbReference>
<dbReference type="RefSeq" id="WP_011264674.1">
    <property type="nucleotide sequence ID" value="NC_006908.1"/>
</dbReference>
<dbReference type="SMR" id="Q6KID6"/>
<dbReference type="STRING" id="267748.MMOB1540"/>
<dbReference type="KEGG" id="mmo:MMOB1540"/>
<dbReference type="eggNOG" id="COG0445">
    <property type="taxonomic scope" value="Bacteria"/>
</dbReference>
<dbReference type="HOGENOM" id="CLU_007831_2_2_14"/>
<dbReference type="OrthoDB" id="9815560at2"/>
<dbReference type="Proteomes" id="UP000009072">
    <property type="component" value="Chromosome"/>
</dbReference>
<dbReference type="GO" id="GO:0005829">
    <property type="term" value="C:cytosol"/>
    <property type="evidence" value="ECO:0007669"/>
    <property type="project" value="TreeGrafter"/>
</dbReference>
<dbReference type="GO" id="GO:0050660">
    <property type="term" value="F:flavin adenine dinucleotide binding"/>
    <property type="evidence" value="ECO:0007669"/>
    <property type="project" value="UniProtKB-UniRule"/>
</dbReference>
<dbReference type="GO" id="GO:0030488">
    <property type="term" value="P:tRNA methylation"/>
    <property type="evidence" value="ECO:0007669"/>
    <property type="project" value="TreeGrafter"/>
</dbReference>
<dbReference type="GO" id="GO:0002098">
    <property type="term" value="P:tRNA wobble uridine modification"/>
    <property type="evidence" value="ECO:0007669"/>
    <property type="project" value="InterPro"/>
</dbReference>
<dbReference type="FunFam" id="1.10.150.570:FF:000001">
    <property type="entry name" value="tRNA uridine 5-carboxymethylaminomethyl modification enzyme MnmG"/>
    <property type="match status" value="1"/>
</dbReference>
<dbReference type="FunFam" id="3.50.50.60:FF:000002">
    <property type="entry name" value="tRNA uridine 5-carboxymethylaminomethyl modification enzyme MnmG"/>
    <property type="match status" value="1"/>
</dbReference>
<dbReference type="Gene3D" id="3.50.50.60">
    <property type="entry name" value="FAD/NAD(P)-binding domain"/>
    <property type="match status" value="2"/>
</dbReference>
<dbReference type="Gene3D" id="1.10.150.570">
    <property type="entry name" value="GidA associated domain, C-terminal subdomain"/>
    <property type="match status" value="1"/>
</dbReference>
<dbReference type="HAMAP" id="MF_00129">
    <property type="entry name" value="MnmG_GidA"/>
    <property type="match status" value="1"/>
</dbReference>
<dbReference type="InterPro" id="IPR036188">
    <property type="entry name" value="FAD/NAD-bd_sf"/>
</dbReference>
<dbReference type="InterPro" id="IPR004416">
    <property type="entry name" value="MnmG"/>
</dbReference>
<dbReference type="InterPro" id="IPR002218">
    <property type="entry name" value="MnmG-rel"/>
</dbReference>
<dbReference type="InterPro" id="IPR020595">
    <property type="entry name" value="MnmG-rel_CS"/>
</dbReference>
<dbReference type="InterPro" id="IPR026904">
    <property type="entry name" value="MnmG_C"/>
</dbReference>
<dbReference type="InterPro" id="IPR047001">
    <property type="entry name" value="MnmG_C_subdom"/>
</dbReference>
<dbReference type="InterPro" id="IPR044920">
    <property type="entry name" value="MnmG_C_subdom_sf"/>
</dbReference>
<dbReference type="InterPro" id="IPR040131">
    <property type="entry name" value="MnmG_N"/>
</dbReference>
<dbReference type="NCBIfam" id="TIGR00136">
    <property type="entry name" value="mnmG_gidA"/>
    <property type="match status" value="1"/>
</dbReference>
<dbReference type="PANTHER" id="PTHR11806">
    <property type="entry name" value="GLUCOSE INHIBITED DIVISION PROTEIN A"/>
    <property type="match status" value="1"/>
</dbReference>
<dbReference type="PANTHER" id="PTHR11806:SF0">
    <property type="entry name" value="PROTEIN MTO1 HOMOLOG, MITOCHONDRIAL"/>
    <property type="match status" value="1"/>
</dbReference>
<dbReference type="Pfam" id="PF01134">
    <property type="entry name" value="GIDA"/>
    <property type="match status" value="1"/>
</dbReference>
<dbReference type="Pfam" id="PF13932">
    <property type="entry name" value="SAM_GIDA_C"/>
    <property type="match status" value="1"/>
</dbReference>
<dbReference type="SMART" id="SM01228">
    <property type="entry name" value="GIDA_assoc_3"/>
    <property type="match status" value="1"/>
</dbReference>
<dbReference type="SUPFAM" id="SSF51905">
    <property type="entry name" value="FAD/NAD(P)-binding domain"/>
    <property type="match status" value="1"/>
</dbReference>
<dbReference type="PROSITE" id="PS01280">
    <property type="entry name" value="GIDA_1"/>
    <property type="match status" value="1"/>
</dbReference>
<dbReference type="PROSITE" id="PS01281">
    <property type="entry name" value="GIDA_2"/>
    <property type="match status" value="1"/>
</dbReference>
<feature type="chain" id="PRO_0000117134" description="tRNA uridine 5-carboxymethylaminomethyl modification enzyme MnmG">
    <location>
        <begin position="1"/>
        <end position="611"/>
    </location>
</feature>
<feature type="binding site" evidence="1">
    <location>
        <begin position="12"/>
        <end position="17"/>
    </location>
    <ligand>
        <name>FAD</name>
        <dbReference type="ChEBI" id="CHEBI:57692"/>
    </ligand>
</feature>
<feature type="binding site" evidence="1">
    <location>
        <position position="124"/>
    </location>
    <ligand>
        <name>FAD</name>
        <dbReference type="ChEBI" id="CHEBI:57692"/>
    </ligand>
</feature>
<feature type="binding site" evidence="1">
    <location>
        <position position="179"/>
    </location>
    <ligand>
        <name>FAD</name>
        <dbReference type="ChEBI" id="CHEBI:57692"/>
    </ligand>
</feature>
<feature type="binding site" evidence="1">
    <location>
        <begin position="271"/>
        <end position="285"/>
    </location>
    <ligand>
        <name>NAD(+)</name>
        <dbReference type="ChEBI" id="CHEBI:57540"/>
    </ligand>
</feature>
<feature type="binding site" evidence="1">
    <location>
        <position position="368"/>
    </location>
    <ligand>
        <name>FAD</name>
        <dbReference type="ChEBI" id="CHEBI:57692"/>
    </ligand>
</feature>